<sequence length="201" mass="21984">MEKFTKLTGVAAPMPVVNIDTDMIIPKDYLKTIKRTGLGKGLFAESRYLEDGSPNPDFVLNKPAYQNAQILVAGDNFGCGSSREHAPWALLDFGIRCVISTSFADIFYNNCFKNGILPVVVSPENLEKLLDDASRGSNAVLSIDLERQEISGPDGGTITFEIDEFKRHCMLNGLDDIGLTLEHAGAIDTFEKANASVRPWA</sequence>
<accession>Q8UBR0</accession>
<comment type="function">
    <text evidence="1">Catalyzes the isomerization between 2-isopropylmalate and 3-isopropylmalate, via the formation of 2-isopropylmaleate.</text>
</comment>
<comment type="catalytic activity">
    <reaction evidence="1">
        <text>(2R,3S)-3-isopropylmalate = (2S)-2-isopropylmalate</text>
        <dbReference type="Rhea" id="RHEA:32287"/>
        <dbReference type="ChEBI" id="CHEBI:1178"/>
        <dbReference type="ChEBI" id="CHEBI:35121"/>
        <dbReference type="EC" id="4.2.1.33"/>
    </reaction>
</comment>
<comment type="pathway">
    <text evidence="1">Amino-acid biosynthesis; L-leucine biosynthesis; L-leucine from 3-methyl-2-oxobutanoate: step 2/4.</text>
</comment>
<comment type="subunit">
    <text evidence="1">Heterodimer of LeuC and LeuD.</text>
</comment>
<comment type="similarity">
    <text evidence="1">Belongs to the LeuD family. LeuD type 1 subfamily.</text>
</comment>
<evidence type="ECO:0000255" key="1">
    <source>
        <dbReference type="HAMAP-Rule" id="MF_01031"/>
    </source>
</evidence>
<gene>
    <name evidence="1" type="primary">leuD</name>
    <name type="ordered locus">Atu2790</name>
    <name type="ORF">AGR_C_5065</name>
</gene>
<organism>
    <name type="scientific">Agrobacterium fabrum (strain C58 / ATCC 33970)</name>
    <name type="common">Agrobacterium tumefaciens (strain C58)</name>
    <dbReference type="NCBI Taxonomy" id="176299"/>
    <lineage>
        <taxon>Bacteria</taxon>
        <taxon>Pseudomonadati</taxon>
        <taxon>Pseudomonadota</taxon>
        <taxon>Alphaproteobacteria</taxon>
        <taxon>Hyphomicrobiales</taxon>
        <taxon>Rhizobiaceae</taxon>
        <taxon>Rhizobium/Agrobacterium group</taxon>
        <taxon>Agrobacterium</taxon>
        <taxon>Agrobacterium tumefaciens complex</taxon>
    </lineage>
</organism>
<keyword id="KW-0028">Amino-acid biosynthesis</keyword>
<keyword id="KW-0100">Branched-chain amino acid biosynthesis</keyword>
<keyword id="KW-0432">Leucine biosynthesis</keyword>
<keyword id="KW-0456">Lyase</keyword>
<keyword id="KW-1185">Reference proteome</keyword>
<protein>
    <recommendedName>
        <fullName evidence="1">3-isopropylmalate dehydratase small subunit</fullName>
        <ecNumber evidence="1">4.2.1.33</ecNumber>
    </recommendedName>
    <alternativeName>
        <fullName evidence="1">Alpha-IPM isomerase</fullName>
        <shortName evidence="1">IPMI</shortName>
    </alternativeName>
    <alternativeName>
        <fullName evidence="1">Isopropylmalate isomerase</fullName>
    </alternativeName>
</protein>
<name>LEUD_AGRFC</name>
<reference key="1">
    <citation type="journal article" date="2001" name="Science">
        <title>The genome of the natural genetic engineer Agrobacterium tumefaciens C58.</title>
        <authorList>
            <person name="Wood D.W."/>
            <person name="Setubal J.C."/>
            <person name="Kaul R."/>
            <person name="Monks D.E."/>
            <person name="Kitajima J.P."/>
            <person name="Okura V.K."/>
            <person name="Zhou Y."/>
            <person name="Chen L."/>
            <person name="Wood G.E."/>
            <person name="Almeida N.F. Jr."/>
            <person name="Woo L."/>
            <person name="Chen Y."/>
            <person name="Paulsen I.T."/>
            <person name="Eisen J.A."/>
            <person name="Karp P.D."/>
            <person name="Bovee D. Sr."/>
            <person name="Chapman P."/>
            <person name="Clendenning J."/>
            <person name="Deatherage G."/>
            <person name="Gillet W."/>
            <person name="Grant C."/>
            <person name="Kutyavin T."/>
            <person name="Levy R."/>
            <person name="Li M.-J."/>
            <person name="McClelland E."/>
            <person name="Palmieri A."/>
            <person name="Raymond C."/>
            <person name="Rouse G."/>
            <person name="Saenphimmachak C."/>
            <person name="Wu Z."/>
            <person name="Romero P."/>
            <person name="Gordon D."/>
            <person name="Zhang S."/>
            <person name="Yoo H."/>
            <person name="Tao Y."/>
            <person name="Biddle P."/>
            <person name="Jung M."/>
            <person name="Krespan W."/>
            <person name="Perry M."/>
            <person name="Gordon-Kamm B."/>
            <person name="Liao L."/>
            <person name="Kim S."/>
            <person name="Hendrick C."/>
            <person name="Zhao Z.-Y."/>
            <person name="Dolan M."/>
            <person name="Chumley F."/>
            <person name="Tingey S.V."/>
            <person name="Tomb J.-F."/>
            <person name="Gordon M.P."/>
            <person name="Olson M.V."/>
            <person name="Nester E.W."/>
        </authorList>
    </citation>
    <scope>NUCLEOTIDE SEQUENCE [LARGE SCALE GENOMIC DNA]</scope>
    <source>
        <strain>C58 / ATCC 33970</strain>
    </source>
</reference>
<reference key="2">
    <citation type="journal article" date="2001" name="Science">
        <title>Genome sequence of the plant pathogen and biotechnology agent Agrobacterium tumefaciens C58.</title>
        <authorList>
            <person name="Goodner B."/>
            <person name="Hinkle G."/>
            <person name="Gattung S."/>
            <person name="Miller N."/>
            <person name="Blanchard M."/>
            <person name="Qurollo B."/>
            <person name="Goldman B.S."/>
            <person name="Cao Y."/>
            <person name="Askenazi M."/>
            <person name="Halling C."/>
            <person name="Mullin L."/>
            <person name="Houmiel K."/>
            <person name="Gordon J."/>
            <person name="Vaudin M."/>
            <person name="Iartchouk O."/>
            <person name="Epp A."/>
            <person name="Liu F."/>
            <person name="Wollam C."/>
            <person name="Allinger M."/>
            <person name="Doughty D."/>
            <person name="Scott C."/>
            <person name="Lappas C."/>
            <person name="Markelz B."/>
            <person name="Flanagan C."/>
            <person name="Crowell C."/>
            <person name="Gurson J."/>
            <person name="Lomo C."/>
            <person name="Sear C."/>
            <person name="Strub G."/>
            <person name="Cielo C."/>
            <person name="Slater S."/>
        </authorList>
    </citation>
    <scope>NUCLEOTIDE SEQUENCE [LARGE SCALE GENOMIC DNA]</scope>
    <source>
        <strain>C58 / ATCC 33970</strain>
    </source>
</reference>
<dbReference type="EC" id="4.2.1.33" evidence="1"/>
<dbReference type="EMBL" id="AE007869">
    <property type="protein sequence ID" value="AAK88503.2"/>
    <property type="molecule type" value="Genomic_DNA"/>
</dbReference>
<dbReference type="PIR" id="AE2919">
    <property type="entry name" value="AE2919"/>
</dbReference>
<dbReference type="PIR" id="F97693">
    <property type="entry name" value="F97693"/>
</dbReference>
<dbReference type="RefSeq" id="NP_355718.2">
    <property type="nucleotide sequence ID" value="NC_003062.2"/>
</dbReference>
<dbReference type="RefSeq" id="WP_010972565.1">
    <property type="nucleotide sequence ID" value="NC_003062.2"/>
</dbReference>
<dbReference type="SMR" id="Q8UBR0"/>
<dbReference type="STRING" id="176299.Atu2790"/>
<dbReference type="EnsemblBacteria" id="AAK88503">
    <property type="protein sequence ID" value="AAK88503"/>
    <property type="gene ID" value="Atu2790"/>
</dbReference>
<dbReference type="GeneID" id="1134828"/>
<dbReference type="KEGG" id="atu:Atu2790"/>
<dbReference type="PATRIC" id="fig|176299.10.peg.2800"/>
<dbReference type="eggNOG" id="COG0066">
    <property type="taxonomic scope" value="Bacteria"/>
</dbReference>
<dbReference type="HOGENOM" id="CLU_081378_0_3_5"/>
<dbReference type="OrthoDB" id="9777465at2"/>
<dbReference type="PhylomeDB" id="Q8UBR0"/>
<dbReference type="BioCyc" id="AGRO:ATU2790-MONOMER"/>
<dbReference type="UniPathway" id="UPA00048">
    <property type="reaction ID" value="UER00071"/>
</dbReference>
<dbReference type="Proteomes" id="UP000000813">
    <property type="component" value="Chromosome circular"/>
</dbReference>
<dbReference type="GO" id="GO:0009316">
    <property type="term" value="C:3-isopropylmalate dehydratase complex"/>
    <property type="evidence" value="ECO:0007669"/>
    <property type="project" value="InterPro"/>
</dbReference>
<dbReference type="GO" id="GO:0003861">
    <property type="term" value="F:3-isopropylmalate dehydratase activity"/>
    <property type="evidence" value="ECO:0007669"/>
    <property type="project" value="UniProtKB-UniRule"/>
</dbReference>
<dbReference type="GO" id="GO:0009098">
    <property type="term" value="P:L-leucine biosynthetic process"/>
    <property type="evidence" value="ECO:0007669"/>
    <property type="project" value="UniProtKB-UniRule"/>
</dbReference>
<dbReference type="CDD" id="cd01577">
    <property type="entry name" value="IPMI_Swivel"/>
    <property type="match status" value="1"/>
</dbReference>
<dbReference type="FunFam" id="3.20.19.10:FF:000003">
    <property type="entry name" value="3-isopropylmalate dehydratase small subunit"/>
    <property type="match status" value="1"/>
</dbReference>
<dbReference type="Gene3D" id="3.20.19.10">
    <property type="entry name" value="Aconitase, domain 4"/>
    <property type="match status" value="1"/>
</dbReference>
<dbReference type="HAMAP" id="MF_01031">
    <property type="entry name" value="LeuD_type1"/>
    <property type="match status" value="1"/>
</dbReference>
<dbReference type="InterPro" id="IPR004431">
    <property type="entry name" value="3-IsopropMal_deHydase_ssu"/>
</dbReference>
<dbReference type="InterPro" id="IPR015928">
    <property type="entry name" value="Aconitase/3IPM_dehydase_swvl"/>
</dbReference>
<dbReference type="InterPro" id="IPR000573">
    <property type="entry name" value="AconitaseA/IPMdHydase_ssu_swvl"/>
</dbReference>
<dbReference type="InterPro" id="IPR033940">
    <property type="entry name" value="IPMI_Swivel"/>
</dbReference>
<dbReference type="InterPro" id="IPR050075">
    <property type="entry name" value="LeuD"/>
</dbReference>
<dbReference type="NCBIfam" id="TIGR00171">
    <property type="entry name" value="leuD"/>
    <property type="match status" value="1"/>
</dbReference>
<dbReference type="NCBIfam" id="NF002458">
    <property type="entry name" value="PRK01641.1"/>
    <property type="match status" value="1"/>
</dbReference>
<dbReference type="PANTHER" id="PTHR43345:SF5">
    <property type="entry name" value="3-ISOPROPYLMALATE DEHYDRATASE SMALL SUBUNIT"/>
    <property type="match status" value="1"/>
</dbReference>
<dbReference type="PANTHER" id="PTHR43345">
    <property type="entry name" value="3-ISOPROPYLMALATE DEHYDRATASE SMALL SUBUNIT 2-RELATED-RELATED"/>
    <property type="match status" value="1"/>
</dbReference>
<dbReference type="Pfam" id="PF00694">
    <property type="entry name" value="Aconitase_C"/>
    <property type="match status" value="1"/>
</dbReference>
<dbReference type="SUPFAM" id="SSF52016">
    <property type="entry name" value="LeuD/IlvD-like"/>
    <property type="match status" value="1"/>
</dbReference>
<proteinExistence type="inferred from homology"/>
<feature type="chain" id="PRO_0000141772" description="3-isopropylmalate dehydratase small subunit">
    <location>
        <begin position="1"/>
        <end position="201"/>
    </location>
</feature>